<accession>Q2Y681</accession>
<organism>
    <name type="scientific">Nitrosospira multiformis (strain ATCC 25196 / NCIMB 11849 / C 71)</name>
    <dbReference type="NCBI Taxonomy" id="323848"/>
    <lineage>
        <taxon>Bacteria</taxon>
        <taxon>Pseudomonadati</taxon>
        <taxon>Pseudomonadota</taxon>
        <taxon>Betaproteobacteria</taxon>
        <taxon>Nitrosomonadales</taxon>
        <taxon>Nitrosomonadaceae</taxon>
        <taxon>Nitrosospira</taxon>
    </lineage>
</organism>
<keyword id="KW-0067">ATP-binding</keyword>
<keyword id="KW-0378">Hydrolase</keyword>
<keyword id="KW-0460">Magnesium</keyword>
<keyword id="KW-0479">Metal-binding</keyword>
<keyword id="KW-0511">Multifunctional enzyme</keyword>
<keyword id="KW-0533">Nickel</keyword>
<keyword id="KW-0547">Nucleotide-binding</keyword>
<keyword id="KW-0548">Nucleotidyltransferase</keyword>
<keyword id="KW-1185">Reference proteome</keyword>
<keyword id="KW-0692">RNA repair</keyword>
<keyword id="KW-0694">RNA-binding</keyword>
<keyword id="KW-0808">Transferase</keyword>
<keyword id="KW-0819">tRNA processing</keyword>
<protein>
    <recommendedName>
        <fullName evidence="1">Multifunctional CCA protein</fullName>
    </recommendedName>
    <domain>
        <recommendedName>
            <fullName evidence="1">CCA-adding enzyme</fullName>
            <ecNumber evidence="1">2.7.7.72</ecNumber>
        </recommendedName>
        <alternativeName>
            <fullName evidence="1">CCA tRNA nucleotidyltransferase</fullName>
        </alternativeName>
        <alternativeName>
            <fullName evidence="1">tRNA CCA-pyrophosphorylase</fullName>
        </alternativeName>
        <alternativeName>
            <fullName evidence="1">tRNA adenylyl-/cytidylyl-transferase</fullName>
        </alternativeName>
        <alternativeName>
            <fullName evidence="1">tRNA nucleotidyltransferase</fullName>
        </alternativeName>
        <alternativeName>
            <fullName evidence="1">tRNA-NT</fullName>
        </alternativeName>
    </domain>
    <domain>
        <recommendedName>
            <fullName evidence="1">2'-nucleotidase</fullName>
            <ecNumber evidence="1">3.1.3.-</ecNumber>
        </recommendedName>
    </domain>
    <domain>
        <recommendedName>
            <fullName evidence="1">2',3'-cyclic phosphodiesterase</fullName>
            <ecNumber evidence="1">3.1.4.-</ecNumber>
        </recommendedName>
    </domain>
    <domain>
        <recommendedName>
            <fullName evidence="1">Phosphatase</fullName>
            <ecNumber evidence="1">3.1.3.-</ecNumber>
        </recommendedName>
    </domain>
</protein>
<sequence length="413" mass="46250">MKTYLVGGSVRDEILGLPVTDHDYVVVGVSPEEMVHLGFRPVGKDFPVFLHPQSQEQYALARTERKVSRGYKGFEVYASPEVTLQEDLARRDLTINAIAKDEYGNIIDPFGGIADLEAGVLRHIGPAFTEDPVRVLRTARFAARFGFHIAPETLALMNEMVHNGEVDALVSERVWQEIARGLMERHPSRMFYALRDCGALTRIMPEVDALFGVPQPPQHHPEIDTGVHVMMVIDYAASRNYSLQVRFAALTHDLGKGTTPPEEWPRHIGHEARSVRLVQGLCERINPPNEMRNLALLVARYHGDVHRAAELRPVTIANLLQGVDAYRKPERFEEFLQACACDFHGRPGYATRPYPQADRLREAFQAARSVDAGAIAKEMARNVSDPSRLPVAINTRVSETRIAEIRNRLGSLA</sequence>
<comment type="function">
    <text evidence="1">Catalyzes the addition and repair of the essential 3'-terminal CCA sequence in tRNAs without using a nucleic acid template. Adds these three nucleotides in the order of C, C, and A to the tRNA nucleotide-73, using CTP and ATP as substrates and producing inorganic pyrophosphate. tRNA 3'-terminal CCA addition is required both for tRNA processing and repair. Also involved in tRNA surveillance by mediating tandem CCA addition to generate a CCACCA at the 3' terminus of unstable tRNAs. While stable tRNAs receive only 3'-terminal CCA, unstable tRNAs are marked with CCACCA and rapidly degraded.</text>
</comment>
<comment type="catalytic activity">
    <reaction evidence="1">
        <text>a tRNA precursor + 2 CTP + ATP = a tRNA with a 3' CCA end + 3 diphosphate</text>
        <dbReference type="Rhea" id="RHEA:14433"/>
        <dbReference type="Rhea" id="RHEA-COMP:10465"/>
        <dbReference type="Rhea" id="RHEA-COMP:10468"/>
        <dbReference type="ChEBI" id="CHEBI:30616"/>
        <dbReference type="ChEBI" id="CHEBI:33019"/>
        <dbReference type="ChEBI" id="CHEBI:37563"/>
        <dbReference type="ChEBI" id="CHEBI:74896"/>
        <dbReference type="ChEBI" id="CHEBI:83071"/>
        <dbReference type="EC" id="2.7.7.72"/>
    </reaction>
</comment>
<comment type="catalytic activity">
    <reaction evidence="1">
        <text>a tRNA with a 3' CCA end + 2 CTP + ATP = a tRNA with a 3' CCACCA end + 3 diphosphate</text>
        <dbReference type="Rhea" id="RHEA:76235"/>
        <dbReference type="Rhea" id="RHEA-COMP:10468"/>
        <dbReference type="Rhea" id="RHEA-COMP:18655"/>
        <dbReference type="ChEBI" id="CHEBI:30616"/>
        <dbReference type="ChEBI" id="CHEBI:33019"/>
        <dbReference type="ChEBI" id="CHEBI:37563"/>
        <dbReference type="ChEBI" id="CHEBI:83071"/>
        <dbReference type="ChEBI" id="CHEBI:195187"/>
    </reaction>
    <physiologicalReaction direction="left-to-right" evidence="1">
        <dbReference type="Rhea" id="RHEA:76236"/>
    </physiologicalReaction>
</comment>
<comment type="cofactor">
    <cofactor evidence="1">
        <name>Mg(2+)</name>
        <dbReference type="ChEBI" id="CHEBI:18420"/>
    </cofactor>
    <text evidence="1">Magnesium is required for nucleotidyltransferase activity.</text>
</comment>
<comment type="cofactor">
    <cofactor evidence="1">
        <name>Ni(2+)</name>
        <dbReference type="ChEBI" id="CHEBI:49786"/>
    </cofactor>
    <text evidence="1">Nickel for phosphatase activity.</text>
</comment>
<comment type="subunit">
    <text evidence="1">Monomer. Can also form homodimers and oligomers.</text>
</comment>
<comment type="domain">
    <text evidence="1">Comprises two domains: an N-terminal domain containing the nucleotidyltransferase activity and a C-terminal HD domain associated with both phosphodiesterase and phosphatase activities.</text>
</comment>
<comment type="miscellaneous">
    <text evidence="1">A single active site specifically recognizes both ATP and CTP and is responsible for their addition.</text>
</comment>
<comment type="similarity">
    <text evidence="1">Belongs to the tRNA nucleotidyltransferase/poly(A) polymerase family. Bacterial CCA-adding enzyme type 1 subfamily.</text>
</comment>
<proteinExistence type="inferred from homology"/>
<dbReference type="EC" id="2.7.7.72" evidence="1"/>
<dbReference type="EC" id="3.1.3.-" evidence="1"/>
<dbReference type="EC" id="3.1.4.-" evidence="1"/>
<dbReference type="EMBL" id="CP000103">
    <property type="protein sequence ID" value="ABB75740.1"/>
    <property type="molecule type" value="Genomic_DNA"/>
</dbReference>
<dbReference type="RefSeq" id="WP_011381741.1">
    <property type="nucleotide sequence ID" value="NC_007614.1"/>
</dbReference>
<dbReference type="SMR" id="Q2Y681"/>
<dbReference type="STRING" id="323848.Nmul_A2451"/>
<dbReference type="KEGG" id="nmu:Nmul_A2451"/>
<dbReference type="eggNOG" id="COG0617">
    <property type="taxonomic scope" value="Bacteria"/>
</dbReference>
<dbReference type="HOGENOM" id="CLU_015961_1_1_4"/>
<dbReference type="OrthoDB" id="9805698at2"/>
<dbReference type="Proteomes" id="UP000002718">
    <property type="component" value="Chromosome"/>
</dbReference>
<dbReference type="GO" id="GO:0005524">
    <property type="term" value="F:ATP binding"/>
    <property type="evidence" value="ECO:0007669"/>
    <property type="project" value="UniProtKB-UniRule"/>
</dbReference>
<dbReference type="GO" id="GO:0004810">
    <property type="term" value="F:CCA tRNA nucleotidyltransferase activity"/>
    <property type="evidence" value="ECO:0007669"/>
    <property type="project" value="UniProtKB-UniRule"/>
</dbReference>
<dbReference type="GO" id="GO:0004112">
    <property type="term" value="F:cyclic-nucleotide phosphodiesterase activity"/>
    <property type="evidence" value="ECO:0007669"/>
    <property type="project" value="UniProtKB-UniRule"/>
</dbReference>
<dbReference type="GO" id="GO:0000287">
    <property type="term" value="F:magnesium ion binding"/>
    <property type="evidence" value="ECO:0007669"/>
    <property type="project" value="UniProtKB-UniRule"/>
</dbReference>
<dbReference type="GO" id="GO:0016791">
    <property type="term" value="F:phosphatase activity"/>
    <property type="evidence" value="ECO:0007669"/>
    <property type="project" value="UniProtKB-UniRule"/>
</dbReference>
<dbReference type="GO" id="GO:0000049">
    <property type="term" value="F:tRNA binding"/>
    <property type="evidence" value="ECO:0007669"/>
    <property type="project" value="UniProtKB-UniRule"/>
</dbReference>
<dbReference type="GO" id="GO:0042245">
    <property type="term" value="P:RNA repair"/>
    <property type="evidence" value="ECO:0007669"/>
    <property type="project" value="UniProtKB-KW"/>
</dbReference>
<dbReference type="GO" id="GO:0001680">
    <property type="term" value="P:tRNA 3'-terminal CCA addition"/>
    <property type="evidence" value="ECO:0007669"/>
    <property type="project" value="UniProtKB-UniRule"/>
</dbReference>
<dbReference type="CDD" id="cd00077">
    <property type="entry name" value="HDc"/>
    <property type="match status" value="1"/>
</dbReference>
<dbReference type="CDD" id="cd05398">
    <property type="entry name" value="NT_ClassII-CCAase"/>
    <property type="match status" value="1"/>
</dbReference>
<dbReference type="Gene3D" id="3.30.460.10">
    <property type="entry name" value="Beta Polymerase, domain 2"/>
    <property type="match status" value="1"/>
</dbReference>
<dbReference type="Gene3D" id="1.10.3090.10">
    <property type="entry name" value="cca-adding enzyme, domain 2"/>
    <property type="match status" value="1"/>
</dbReference>
<dbReference type="HAMAP" id="MF_01261">
    <property type="entry name" value="CCA_bact_type1"/>
    <property type="match status" value="1"/>
</dbReference>
<dbReference type="HAMAP" id="MF_01262">
    <property type="entry name" value="CCA_bact_type2"/>
    <property type="match status" value="1"/>
</dbReference>
<dbReference type="InterPro" id="IPR012006">
    <property type="entry name" value="CCA_bact"/>
</dbReference>
<dbReference type="InterPro" id="IPR003607">
    <property type="entry name" value="HD/PDEase_dom"/>
</dbReference>
<dbReference type="InterPro" id="IPR006674">
    <property type="entry name" value="HD_domain"/>
</dbReference>
<dbReference type="InterPro" id="IPR043519">
    <property type="entry name" value="NT_sf"/>
</dbReference>
<dbReference type="InterPro" id="IPR002646">
    <property type="entry name" value="PolA_pol_head_dom"/>
</dbReference>
<dbReference type="InterPro" id="IPR032828">
    <property type="entry name" value="PolyA_RNA-bd"/>
</dbReference>
<dbReference type="InterPro" id="IPR050124">
    <property type="entry name" value="tRNA_CCA-adding_enzyme"/>
</dbReference>
<dbReference type="NCBIfam" id="NF008137">
    <property type="entry name" value="PRK10885.1"/>
    <property type="match status" value="1"/>
</dbReference>
<dbReference type="PANTHER" id="PTHR47545">
    <property type="entry name" value="MULTIFUNCTIONAL CCA PROTEIN"/>
    <property type="match status" value="1"/>
</dbReference>
<dbReference type="PANTHER" id="PTHR47545:SF1">
    <property type="entry name" value="MULTIFUNCTIONAL CCA PROTEIN"/>
    <property type="match status" value="1"/>
</dbReference>
<dbReference type="Pfam" id="PF01966">
    <property type="entry name" value="HD"/>
    <property type="match status" value="1"/>
</dbReference>
<dbReference type="Pfam" id="PF01743">
    <property type="entry name" value="PolyA_pol"/>
    <property type="match status" value="1"/>
</dbReference>
<dbReference type="Pfam" id="PF12627">
    <property type="entry name" value="PolyA_pol_RNAbd"/>
    <property type="match status" value="1"/>
</dbReference>
<dbReference type="PIRSF" id="PIRSF000813">
    <property type="entry name" value="CCA_bact"/>
    <property type="match status" value="1"/>
</dbReference>
<dbReference type="SUPFAM" id="SSF81301">
    <property type="entry name" value="Nucleotidyltransferase"/>
    <property type="match status" value="1"/>
</dbReference>
<dbReference type="SUPFAM" id="SSF81891">
    <property type="entry name" value="Poly A polymerase C-terminal region-like"/>
    <property type="match status" value="1"/>
</dbReference>
<dbReference type="PROSITE" id="PS51831">
    <property type="entry name" value="HD"/>
    <property type="match status" value="1"/>
</dbReference>
<reference key="1">
    <citation type="submission" date="2005-08" db="EMBL/GenBank/DDBJ databases">
        <title>Complete sequence of chromosome 1 of Nitrosospira multiformis ATCC 25196.</title>
        <authorList>
            <person name="Copeland A."/>
            <person name="Lucas S."/>
            <person name="Lapidus A."/>
            <person name="Barry K."/>
            <person name="Detter J.C."/>
            <person name="Glavina T."/>
            <person name="Hammon N."/>
            <person name="Israni S."/>
            <person name="Pitluck S."/>
            <person name="Chain P."/>
            <person name="Malfatti S."/>
            <person name="Shin M."/>
            <person name="Vergez L."/>
            <person name="Schmutz J."/>
            <person name="Larimer F."/>
            <person name="Land M."/>
            <person name="Hauser L."/>
            <person name="Kyrpides N."/>
            <person name="Lykidis A."/>
            <person name="Richardson P."/>
        </authorList>
    </citation>
    <scope>NUCLEOTIDE SEQUENCE [LARGE SCALE GENOMIC DNA]</scope>
    <source>
        <strain>ATCC 25196 / NCIMB 11849 / C 71</strain>
    </source>
</reference>
<feature type="chain" id="PRO_1000054276" description="Multifunctional CCA protein">
    <location>
        <begin position="1"/>
        <end position="413"/>
    </location>
</feature>
<feature type="domain" description="HD" evidence="1">
    <location>
        <begin position="225"/>
        <end position="326"/>
    </location>
</feature>
<feature type="binding site" evidence="1">
    <location>
        <position position="8"/>
    </location>
    <ligand>
        <name>ATP</name>
        <dbReference type="ChEBI" id="CHEBI:30616"/>
    </ligand>
</feature>
<feature type="binding site" evidence="1">
    <location>
        <position position="8"/>
    </location>
    <ligand>
        <name>CTP</name>
        <dbReference type="ChEBI" id="CHEBI:37563"/>
    </ligand>
</feature>
<feature type="binding site" evidence="1">
    <location>
        <position position="11"/>
    </location>
    <ligand>
        <name>ATP</name>
        <dbReference type="ChEBI" id="CHEBI:30616"/>
    </ligand>
</feature>
<feature type="binding site" evidence="1">
    <location>
        <position position="11"/>
    </location>
    <ligand>
        <name>CTP</name>
        <dbReference type="ChEBI" id="CHEBI:37563"/>
    </ligand>
</feature>
<feature type="binding site" evidence="1">
    <location>
        <position position="21"/>
    </location>
    <ligand>
        <name>Mg(2+)</name>
        <dbReference type="ChEBI" id="CHEBI:18420"/>
    </ligand>
</feature>
<feature type="binding site" evidence="1">
    <location>
        <position position="23"/>
    </location>
    <ligand>
        <name>Mg(2+)</name>
        <dbReference type="ChEBI" id="CHEBI:18420"/>
    </ligand>
</feature>
<feature type="binding site" evidence="1">
    <location>
        <position position="91"/>
    </location>
    <ligand>
        <name>ATP</name>
        <dbReference type="ChEBI" id="CHEBI:30616"/>
    </ligand>
</feature>
<feature type="binding site" evidence="1">
    <location>
        <position position="91"/>
    </location>
    <ligand>
        <name>CTP</name>
        <dbReference type="ChEBI" id="CHEBI:37563"/>
    </ligand>
</feature>
<feature type="binding site" evidence="1">
    <location>
        <position position="137"/>
    </location>
    <ligand>
        <name>ATP</name>
        <dbReference type="ChEBI" id="CHEBI:30616"/>
    </ligand>
</feature>
<feature type="binding site" evidence="1">
    <location>
        <position position="137"/>
    </location>
    <ligand>
        <name>CTP</name>
        <dbReference type="ChEBI" id="CHEBI:37563"/>
    </ligand>
</feature>
<feature type="binding site" evidence="1">
    <location>
        <position position="140"/>
    </location>
    <ligand>
        <name>ATP</name>
        <dbReference type="ChEBI" id="CHEBI:30616"/>
    </ligand>
</feature>
<feature type="binding site" evidence="1">
    <location>
        <position position="140"/>
    </location>
    <ligand>
        <name>CTP</name>
        <dbReference type="ChEBI" id="CHEBI:37563"/>
    </ligand>
</feature>
<gene>
    <name evidence="1" type="primary">cca</name>
    <name type="ordered locus">Nmul_A2451</name>
</gene>
<evidence type="ECO:0000255" key="1">
    <source>
        <dbReference type="HAMAP-Rule" id="MF_01261"/>
    </source>
</evidence>
<name>CCA_NITMU</name>